<sequence length="269" mass="28760">MNRIHAVILDWAGTTVDFGSFAPTQIFVEAFRQAFDVEITLAEARVPMGLGKWQHIEALGKLPAVDARWQAKFGRSMSAADIDAIYAAFMPLQIAKVIDFSSPIAGVIDTIAALRAEGIKIGSCSGYPRAVMERLVPAAAEHGYRPDHWVATDDLVAGGRPGPWMALQNVIALGIDAVAHCVKVDDAAPGISEGLNAGMWTVGLAVSGNEFGATWDAYQTMSKEDVAVRREHAASKLYAAGAHYVVDSLADLPEVIAHINARLAQGERP</sequence>
<feature type="chain" id="PRO_1000144836" description="Phosphonoacetaldehyde hydrolase">
    <location>
        <begin position="1"/>
        <end position="269"/>
    </location>
</feature>
<feature type="active site" description="Nucleophile" evidence="1">
    <location>
        <position position="10"/>
    </location>
</feature>
<feature type="active site" description="Schiff-base intermediate with substrate" evidence="1">
    <location>
        <position position="52"/>
    </location>
</feature>
<feature type="binding site" evidence="1">
    <location>
        <position position="10"/>
    </location>
    <ligand>
        <name>Mg(2+)</name>
        <dbReference type="ChEBI" id="CHEBI:18420"/>
    </ligand>
</feature>
<feature type="binding site" evidence="1">
    <location>
        <position position="12"/>
    </location>
    <ligand>
        <name>Mg(2+)</name>
        <dbReference type="ChEBI" id="CHEBI:18420"/>
    </ligand>
</feature>
<feature type="binding site" evidence="1">
    <location>
        <position position="186"/>
    </location>
    <ligand>
        <name>Mg(2+)</name>
        <dbReference type="ChEBI" id="CHEBI:18420"/>
    </ligand>
</feature>
<comment type="function">
    <text evidence="1">Involved in phosphonate degradation.</text>
</comment>
<comment type="catalytic activity">
    <reaction evidence="1">
        <text>phosphonoacetaldehyde + H2O = acetaldehyde + phosphate + H(+)</text>
        <dbReference type="Rhea" id="RHEA:18905"/>
        <dbReference type="ChEBI" id="CHEBI:15343"/>
        <dbReference type="ChEBI" id="CHEBI:15377"/>
        <dbReference type="ChEBI" id="CHEBI:15378"/>
        <dbReference type="ChEBI" id="CHEBI:43474"/>
        <dbReference type="ChEBI" id="CHEBI:58383"/>
        <dbReference type="EC" id="3.11.1.1"/>
    </reaction>
</comment>
<comment type="cofactor">
    <cofactor evidence="1">
        <name>Mg(2+)</name>
        <dbReference type="ChEBI" id="CHEBI:18420"/>
    </cofactor>
    <text evidence="1">Binds 1 Mg(2+) ion per subunit.</text>
</comment>
<comment type="subunit">
    <text evidence="1">Homodimer.</text>
</comment>
<comment type="similarity">
    <text evidence="1">Belongs to the HAD-like hydrolase superfamily. PhnX family.</text>
</comment>
<name>PHNX_SALA4</name>
<gene>
    <name evidence="1" type="primary">phnX</name>
    <name type="ordered locus">SeAg_B0471</name>
</gene>
<keyword id="KW-0378">Hydrolase</keyword>
<keyword id="KW-0460">Magnesium</keyword>
<keyword id="KW-0479">Metal-binding</keyword>
<keyword id="KW-0704">Schiff base</keyword>
<protein>
    <recommendedName>
        <fullName evidence="1">Phosphonoacetaldehyde hydrolase</fullName>
        <shortName evidence="1">Phosphonatase</shortName>
        <ecNumber evidence="1">3.11.1.1</ecNumber>
    </recommendedName>
    <alternativeName>
        <fullName evidence="1">Phosphonoacetaldehyde phosphonohydrolase</fullName>
    </alternativeName>
</protein>
<evidence type="ECO:0000255" key="1">
    <source>
        <dbReference type="HAMAP-Rule" id="MF_01375"/>
    </source>
</evidence>
<dbReference type="EC" id="3.11.1.1" evidence="1"/>
<dbReference type="EMBL" id="CP001138">
    <property type="protein sequence ID" value="ACH52519.1"/>
    <property type="molecule type" value="Genomic_DNA"/>
</dbReference>
<dbReference type="RefSeq" id="WP_001079739.1">
    <property type="nucleotide sequence ID" value="NC_011149.1"/>
</dbReference>
<dbReference type="SMR" id="B5EXH2"/>
<dbReference type="KEGG" id="sea:SeAg_B0471"/>
<dbReference type="HOGENOM" id="CLU_045011_12_0_6"/>
<dbReference type="Proteomes" id="UP000008819">
    <property type="component" value="Chromosome"/>
</dbReference>
<dbReference type="GO" id="GO:0005829">
    <property type="term" value="C:cytosol"/>
    <property type="evidence" value="ECO:0007669"/>
    <property type="project" value="TreeGrafter"/>
</dbReference>
<dbReference type="GO" id="GO:0000287">
    <property type="term" value="F:magnesium ion binding"/>
    <property type="evidence" value="ECO:0007669"/>
    <property type="project" value="UniProtKB-UniRule"/>
</dbReference>
<dbReference type="GO" id="GO:0008967">
    <property type="term" value="F:phosphoglycolate phosphatase activity"/>
    <property type="evidence" value="ECO:0007669"/>
    <property type="project" value="TreeGrafter"/>
</dbReference>
<dbReference type="GO" id="GO:0050194">
    <property type="term" value="F:phosphonoacetaldehyde hydrolase activity"/>
    <property type="evidence" value="ECO:0007669"/>
    <property type="project" value="UniProtKB-UniRule"/>
</dbReference>
<dbReference type="GO" id="GO:0006281">
    <property type="term" value="P:DNA repair"/>
    <property type="evidence" value="ECO:0007669"/>
    <property type="project" value="TreeGrafter"/>
</dbReference>
<dbReference type="GO" id="GO:0019700">
    <property type="term" value="P:organic phosphonate catabolic process"/>
    <property type="evidence" value="ECO:0007669"/>
    <property type="project" value="InterPro"/>
</dbReference>
<dbReference type="CDD" id="cd02586">
    <property type="entry name" value="HAD_PHN"/>
    <property type="match status" value="1"/>
</dbReference>
<dbReference type="FunFam" id="1.10.150.240:FF:000006">
    <property type="entry name" value="Phosphonoacetaldehyde hydrolase"/>
    <property type="match status" value="1"/>
</dbReference>
<dbReference type="FunFam" id="3.40.50.1000:FF:000072">
    <property type="entry name" value="Phosphonoacetaldehyde hydrolase"/>
    <property type="match status" value="1"/>
</dbReference>
<dbReference type="Gene3D" id="3.40.50.1000">
    <property type="entry name" value="HAD superfamily/HAD-like"/>
    <property type="match status" value="1"/>
</dbReference>
<dbReference type="Gene3D" id="1.10.150.240">
    <property type="entry name" value="Putative phosphatase, domain 2"/>
    <property type="match status" value="1"/>
</dbReference>
<dbReference type="HAMAP" id="MF_01375">
    <property type="entry name" value="PhnX"/>
    <property type="match status" value="1"/>
</dbReference>
<dbReference type="InterPro" id="IPR050155">
    <property type="entry name" value="HAD-like_hydrolase_sf"/>
</dbReference>
<dbReference type="InterPro" id="IPR036412">
    <property type="entry name" value="HAD-like_sf"/>
</dbReference>
<dbReference type="InterPro" id="IPR006439">
    <property type="entry name" value="HAD-SF_hydro_IA"/>
</dbReference>
<dbReference type="InterPro" id="IPR023214">
    <property type="entry name" value="HAD_sf"/>
</dbReference>
<dbReference type="InterPro" id="IPR023198">
    <property type="entry name" value="PGP-like_dom2"/>
</dbReference>
<dbReference type="InterPro" id="IPR006323">
    <property type="entry name" value="Phosphonoacetald_hydro"/>
</dbReference>
<dbReference type="NCBIfam" id="TIGR01509">
    <property type="entry name" value="HAD-SF-IA-v3"/>
    <property type="match status" value="1"/>
</dbReference>
<dbReference type="NCBIfam" id="TIGR01422">
    <property type="entry name" value="phosphonatase"/>
    <property type="match status" value="1"/>
</dbReference>
<dbReference type="PANTHER" id="PTHR43434">
    <property type="entry name" value="PHOSPHOGLYCOLATE PHOSPHATASE"/>
    <property type="match status" value="1"/>
</dbReference>
<dbReference type="PANTHER" id="PTHR43434:SF19">
    <property type="entry name" value="PHOSPHONOACETALDEHYDE HYDROLASE"/>
    <property type="match status" value="1"/>
</dbReference>
<dbReference type="Pfam" id="PF00702">
    <property type="entry name" value="Hydrolase"/>
    <property type="match status" value="1"/>
</dbReference>
<dbReference type="SFLD" id="SFLDG01129">
    <property type="entry name" value="C1.5:_HAD__Beta-PGM__Phosphata"/>
    <property type="match status" value="1"/>
</dbReference>
<dbReference type="SFLD" id="SFLDF00038">
    <property type="entry name" value="phosphonoacetaldehyde_hydrolas"/>
    <property type="match status" value="1"/>
</dbReference>
<dbReference type="SUPFAM" id="SSF56784">
    <property type="entry name" value="HAD-like"/>
    <property type="match status" value="1"/>
</dbReference>
<organism>
    <name type="scientific">Salmonella agona (strain SL483)</name>
    <dbReference type="NCBI Taxonomy" id="454166"/>
    <lineage>
        <taxon>Bacteria</taxon>
        <taxon>Pseudomonadati</taxon>
        <taxon>Pseudomonadota</taxon>
        <taxon>Gammaproteobacteria</taxon>
        <taxon>Enterobacterales</taxon>
        <taxon>Enterobacteriaceae</taxon>
        <taxon>Salmonella</taxon>
    </lineage>
</organism>
<proteinExistence type="inferred from homology"/>
<accession>B5EXH2</accession>
<reference key="1">
    <citation type="journal article" date="2011" name="J. Bacteriol.">
        <title>Comparative genomics of 28 Salmonella enterica isolates: evidence for CRISPR-mediated adaptive sublineage evolution.</title>
        <authorList>
            <person name="Fricke W.F."/>
            <person name="Mammel M.K."/>
            <person name="McDermott P.F."/>
            <person name="Tartera C."/>
            <person name="White D.G."/>
            <person name="Leclerc J.E."/>
            <person name="Ravel J."/>
            <person name="Cebula T.A."/>
        </authorList>
    </citation>
    <scope>NUCLEOTIDE SEQUENCE [LARGE SCALE GENOMIC DNA]</scope>
    <source>
        <strain>SL483</strain>
    </source>
</reference>